<dbReference type="EC" id="2.7.1.48"/>
<dbReference type="EC" id="2.4.2.9"/>
<dbReference type="EMBL" id="AB024028">
    <property type="protein sequence ID" value="BAA95720.1"/>
    <property type="molecule type" value="Genomic_DNA"/>
</dbReference>
<dbReference type="EMBL" id="CP002686">
    <property type="protein sequence ID" value="AEE77321.1"/>
    <property type="molecule type" value="Genomic_DNA"/>
</dbReference>
<dbReference type="RefSeq" id="NP_189380.1">
    <property type="nucleotide sequence ID" value="NM_113659.2"/>
</dbReference>
<dbReference type="SMR" id="Q9LTY6"/>
<dbReference type="BioGRID" id="7695">
    <property type="interactions" value="1"/>
</dbReference>
<dbReference type="FunCoup" id="Q9LTY6">
    <property type="interactions" value="3150"/>
</dbReference>
<dbReference type="STRING" id="3702.Q9LTY6"/>
<dbReference type="PaxDb" id="3702-AT3G27440.1"/>
<dbReference type="ProteomicsDB" id="246397"/>
<dbReference type="EnsemblPlants" id="AT3G27440.1">
    <property type="protein sequence ID" value="AT3G27440.1"/>
    <property type="gene ID" value="AT3G27440"/>
</dbReference>
<dbReference type="GeneID" id="822365"/>
<dbReference type="Gramene" id="AT3G27440.1">
    <property type="protein sequence ID" value="AT3G27440.1"/>
    <property type="gene ID" value="AT3G27440"/>
</dbReference>
<dbReference type="KEGG" id="ath:AT3G27440"/>
<dbReference type="Araport" id="AT3G27440"/>
<dbReference type="TAIR" id="AT3G27440">
    <property type="gene designation" value="UKL5"/>
</dbReference>
<dbReference type="eggNOG" id="KOG4203">
    <property type="taxonomic scope" value="Eukaryota"/>
</dbReference>
<dbReference type="HOGENOM" id="CLU_021278_3_0_1"/>
<dbReference type="InParanoid" id="Q9LTY6"/>
<dbReference type="OMA" id="VCNKYPR"/>
<dbReference type="OrthoDB" id="106623at2759"/>
<dbReference type="PhylomeDB" id="Q9LTY6"/>
<dbReference type="BioCyc" id="ARA:AT3G27440-MONOMER"/>
<dbReference type="UniPathway" id="UPA00574">
    <property type="reaction ID" value="UER00636"/>
</dbReference>
<dbReference type="UniPathway" id="UPA00574">
    <property type="reaction ID" value="UER00637"/>
</dbReference>
<dbReference type="UniPathway" id="UPA00579">
    <property type="reaction ID" value="UER00640"/>
</dbReference>
<dbReference type="PRO" id="PR:Q9LTY6"/>
<dbReference type="Proteomes" id="UP000006548">
    <property type="component" value="Chromosome 3"/>
</dbReference>
<dbReference type="ExpressionAtlas" id="Q9LTY6">
    <property type="expression patterns" value="baseline and differential"/>
</dbReference>
<dbReference type="GO" id="GO:0005524">
    <property type="term" value="F:ATP binding"/>
    <property type="evidence" value="ECO:0007669"/>
    <property type="project" value="InterPro"/>
</dbReference>
<dbReference type="GO" id="GO:0043771">
    <property type="term" value="F:cytidine kinase activity"/>
    <property type="evidence" value="ECO:0007669"/>
    <property type="project" value="RHEA"/>
</dbReference>
<dbReference type="GO" id="GO:0005525">
    <property type="term" value="F:GTP binding"/>
    <property type="evidence" value="ECO:0007669"/>
    <property type="project" value="UniProtKB-KW"/>
</dbReference>
<dbReference type="GO" id="GO:0004845">
    <property type="term" value="F:uracil phosphoribosyltransferase activity"/>
    <property type="evidence" value="ECO:0007669"/>
    <property type="project" value="UniProtKB-EC"/>
</dbReference>
<dbReference type="GO" id="GO:0004849">
    <property type="term" value="F:uridine kinase activity"/>
    <property type="evidence" value="ECO:0007669"/>
    <property type="project" value="UniProtKB-EC"/>
</dbReference>
<dbReference type="GO" id="GO:0044211">
    <property type="term" value="P:CTP salvage"/>
    <property type="evidence" value="ECO:0007669"/>
    <property type="project" value="UniProtKB-UniPathway"/>
</dbReference>
<dbReference type="GO" id="GO:0044206">
    <property type="term" value="P:UMP salvage"/>
    <property type="evidence" value="ECO:0007669"/>
    <property type="project" value="UniProtKB-UniPathway"/>
</dbReference>
<dbReference type="CDD" id="cd06223">
    <property type="entry name" value="PRTases_typeI"/>
    <property type="match status" value="1"/>
</dbReference>
<dbReference type="CDD" id="cd02023">
    <property type="entry name" value="UMPK"/>
    <property type="match status" value="1"/>
</dbReference>
<dbReference type="FunFam" id="3.40.50.2020:FF:000015">
    <property type="entry name" value="Uridine kinase"/>
    <property type="match status" value="1"/>
</dbReference>
<dbReference type="FunFam" id="3.40.50.300:FF:000339">
    <property type="entry name" value="Uridine kinase"/>
    <property type="match status" value="1"/>
</dbReference>
<dbReference type="Gene3D" id="3.40.50.2020">
    <property type="match status" value="1"/>
</dbReference>
<dbReference type="Gene3D" id="3.40.50.300">
    <property type="entry name" value="P-loop containing nucleotide triphosphate hydrolases"/>
    <property type="match status" value="1"/>
</dbReference>
<dbReference type="InterPro" id="IPR027417">
    <property type="entry name" value="P-loop_NTPase"/>
</dbReference>
<dbReference type="InterPro" id="IPR000836">
    <property type="entry name" value="PRibTrfase_dom"/>
</dbReference>
<dbReference type="InterPro" id="IPR006083">
    <property type="entry name" value="PRK/URK"/>
</dbReference>
<dbReference type="InterPro" id="IPR029057">
    <property type="entry name" value="PRTase-like"/>
</dbReference>
<dbReference type="InterPro" id="IPR000764">
    <property type="entry name" value="Uridine_kinase-like"/>
</dbReference>
<dbReference type="NCBIfam" id="NF001097">
    <property type="entry name" value="PRK00129.1"/>
    <property type="match status" value="1"/>
</dbReference>
<dbReference type="NCBIfam" id="NF004018">
    <property type="entry name" value="PRK05480.1"/>
    <property type="match status" value="1"/>
</dbReference>
<dbReference type="NCBIfam" id="TIGR00235">
    <property type="entry name" value="udk"/>
    <property type="match status" value="1"/>
</dbReference>
<dbReference type="PANTHER" id="PTHR10285">
    <property type="entry name" value="URIDINE KINASE"/>
    <property type="match status" value="1"/>
</dbReference>
<dbReference type="Pfam" id="PF00485">
    <property type="entry name" value="PRK"/>
    <property type="match status" value="1"/>
</dbReference>
<dbReference type="Pfam" id="PF14681">
    <property type="entry name" value="UPRTase"/>
    <property type="match status" value="1"/>
</dbReference>
<dbReference type="PRINTS" id="PR00988">
    <property type="entry name" value="URIDINKINASE"/>
</dbReference>
<dbReference type="SUPFAM" id="SSF52540">
    <property type="entry name" value="P-loop containing nucleoside triphosphate hydrolases"/>
    <property type="match status" value="1"/>
</dbReference>
<dbReference type="SUPFAM" id="SSF53271">
    <property type="entry name" value="PRTase-like"/>
    <property type="match status" value="1"/>
</dbReference>
<feature type="chain" id="PRO_0000394517" description="Uridine kinase-like protein 5">
    <location>
        <begin position="1"/>
        <end position="465"/>
    </location>
</feature>
<feature type="region of interest" description="Uridine kinase" evidence="1">
    <location>
        <begin position="26"/>
        <end position="230"/>
    </location>
</feature>
<feature type="region of interest" description="Uracil phosphoribosyltransferase" evidence="1">
    <location>
        <begin position="240"/>
        <end position="465"/>
    </location>
</feature>
<feature type="binding site" evidence="1">
    <location>
        <position position="264"/>
    </location>
    <ligand>
        <name>GTP</name>
        <dbReference type="ChEBI" id="CHEBI:37565"/>
    </ligand>
</feature>
<feature type="binding site" evidence="1">
    <location>
        <position position="273"/>
    </location>
    <ligand>
        <name>GTP</name>
        <dbReference type="ChEBI" id="CHEBI:37565"/>
    </ligand>
</feature>
<feature type="binding site" evidence="1">
    <location>
        <begin position="307"/>
        <end position="310"/>
    </location>
    <ligand>
        <name>GTP</name>
        <dbReference type="ChEBI" id="CHEBI:37565"/>
    </ligand>
</feature>
<feature type="binding site" evidence="1">
    <location>
        <position position="317"/>
    </location>
    <ligand>
        <name>5-phospho-alpha-D-ribose 1-diphosphate</name>
        <dbReference type="ChEBI" id="CHEBI:58017"/>
    </ligand>
</feature>
<feature type="binding site" evidence="1">
    <location>
        <position position="342"/>
    </location>
    <ligand>
        <name>5-phospho-alpha-D-ribose 1-diphosphate</name>
        <dbReference type="ChEBI" id="CHEBI:58017"/>
    </ligand>
</feature>
<feature type="binding site" evidence="1">
    <location>
        <position position="362"/>
    </location>
    <ligand>
        <name>GTP</name>
        <dbReference type="ChEBI" id="CHEBI:37565"/>
    </ligand>
</feature>
<feature type="binding site" evidence="1">
    <location>
        <position position="368"/>
    </location>
    <ligand>
        <name>5-phospho-alpha-D-ribose 1-diphosphate</name>
        <dbReference type="ChEBI" id="CHEBI:58017"/>
    </ligand>
</feature>
<feature type="binding site" evidence="1">
    <location>
        <begin position="373"/>
        <end position="376"/>
    </location>
    <ligand>
        <name>5-phospho-alpha-D-ribose 1-diphosphate</name>
        <dbReference type="ChEBI" id="CHEBI:58017"/>
    </ligand>
</feature>
<feature type="binding site" evidence="1">
    <location>
        <begin position="438"/>
        <end position="440"/>
    </location>
    <ligand>
        <name>uracil</name>
        <dbReference type="ChEBI" id="CHEBI:17568"/>
    </ligand>
</feature>
<feature type="binding site" evidence="1">
    <location>
        <position position="439"/>
    </location>
    <ligand>
        <name>5-phospho-alpha-D-ribose 1-diphosphate</name>
        <dbReference type="ChEBI" id="CHEBI:58017"/>
    </ligand>
</feature>
<name>UKL5_ARATH</name>
<accession>Q9LTY6</accession>
<sequence>MEKLSNGVRDHCLISDYVSPSAPAPLKQPFVIGVAGGTASGKTTVCNMIMSQLHDQRVVLVNQDSFYHSLTKEKLNKVHEYNFDHPDAFNTEVLLSCMEKLRSGQPVNIPSYDFKIHQSIESSSPVNPGDVIILEGILVLNDPRVRDLMNMKIFVDTDADVRLSRRIQRDTVERGRNIQNVLEQYTKFVKPSFDEYIQPSMKYADIIIPRGGDNDVAIDLIVQHIRTKLCQHNLCKIYSNIFIISSTFQIKGMHTLIRDINTTKHDFVFYADRLIRLVVEHGLGHLPFTEKQITTPTGSVYTGVDFCKRLCGVSVIRSGESMENALRACCNGIKIGKILIHRENNDGRQLIYEKLPKDISSRHVFLLDPVLASGYSAVKAITLLLSKGVPESHIIFLNLIAAPQGIHALCKKFPMLKIVTSEIDSSLNEDSRVIPGLGEFADRYFGTNNINSKVSSLSTNLKLRS</sequence>
<protein>
    <recommendedName>
        <fullName>Uridine kinase-like protein 5</fullName>
    </recommendedName>
    <domain>
        <recommendedName>
            <fullName>Probable uridine kinase</fullName>
            <shortName>UK</shortName>
            <ecNumber>2.7.1.48</ecNumber>
        </recommendedName>
    </domain>
    <domain>
        <recommendedName>
            <fullName>Probable uracil phosphoribosyltransferase</fullName>
            <shortName>UPRTase</shortName>
            <ecNumber>2.4.2.9</ecNumber>
        </recommendedName>
        <alternativeName>
            <fullName>UMP pyrophosphorylase</fullName>
        </alternativeName>
    </domain>
</protein>
<gene>
    <name type="primary">UKL5</name>
    <name type="ordered locus">At3g27440</name>
    <name type="ORF">K1G2.27</name>
</gene>
<organism>
    <name type="scientific">Arabidopsis thaliana</name>
    <name type="common">Mouse-ear cress</name>
    <dbReference type="NCBI Taxonomy" id="3702"/>
    <lineage>
        <taxon>Eukaryota</taxon>
        <taxon>Viridiplantae</taxon>
        <taxon>Streptophyta</taxon>
        <taxon>Embryophyta</taxon>
        <taxon>Tracheophyta</taxon>
        <taxon>Spermatophyta</taxon>
        <taxon>Magnoliopsida</taxon>
        <taxon>eudicotyledons</taxon>
        <taxon>Gunneridae</taxon>
        <taxon>Pentapetalae</taxon>
        <taxon>rosids</taxon>
        <taxon>malvids</taxon>
        <taxon>Brassicales</taxon>
        <taxon>Brassicaceae</taxon>
        <taxon>Camelineae</taxon>
        <taxon>Arabidopsis</taxon>
    </lineage>
</organism>
<reference key="1">
    <citation type="journal article" date="2000" name="DNA Res.">
        <title>Structural analysis of Arabidopsis thaliana chromosome 3. I. Sequence features of the regions of 4,504,864 bp covered by sixty P1 and TAC clones.</title>
        <authorList>
            <person name="Sato S."/>
            <person name="Nakamura Y."/>
            <person name="Kaneko T."/>
            <person name="Katoh T."/>
            <person name="Asamizu E."/>
            <person name="Tabata S."/>
        </authorList>
    </citation>
    <scope>NUCLEOTIDE SEQUENCE [LARGE SCALE GENOMIC DNA]</scope>
    <source>
        <strain>cv. Columbia</strain>
    </source>
</reference>
<reference key="2">
    <citation type="journal article" date="2017" name="Plant J.">
        <title>Araport11: a complete reannotation of the Arabidopsis thaliana reference genome.</title>
        <authorList>
            <person name="Cheng C.Y."/>
            <person name="Krishnakumar V."/>
            <person name="Chan A.P."/>
            <person name="Thibaud-Nissen F."/>
            <person name="Schobel S."/>
            <person name="Town C.D."/>
        </authorList>
    </citation>
    <scope>GENOME REANNOTATION</scope>
    <source>
        <strain>cv. Columbia</strain>
    </source>
</reference>
<reference key="3">
    <citation type="journal article" date="2009" name="Plant J.">
        <title>Uracil salvage is necessary for early Arabidopsis development.</title>
        <authorList>
            <person name="Mainguet S.E."/>
            <person name="Gakiere B."/>
            <person name="Majira A."/>
            <person name="Pelletier S."/>
            <person name="Bringel F."/>
            <person name="Guerard F."/>
            <person name="Caboche M."/>
            <person name="Berthome R."/>
            <person name="Renou J.P."/>
        </authorList>
    </citation>
    <scope>FUNCTION</scope>
    <scope>GENE FAMILY</scope>
    <scope>NOMENCLATURE</scope>
</reference>
<proteinExistence type="evidence at transcript level"/>
<evidence type="ECO:0000250" key="1"/>
<evidence type="ECO:0000269" key="2">
    <source>
    </source>
</evidence>
<evidence type="ECO:0000305" key="3"/>
<keyword id="KW-0021">Allosteric enzyme</keyword>
<keyword id="KW-0328">Glycosyltransferase</keyword>
<keyword id="KW-0342">GTP-binding</keyword>
<keyword id="KW-0418">Kinase</keyword>
<keyword id="KW-0511">Multifunctional enzyme</keyword>
<keyword id="KW-0547">Nucleotide-binding</keyword>
<keyword id="KW-1185">Reference proteome</keyword>
<keyword id="KW-0808">Transferase</keyword>
<comment type="function">
    <text evidence="1 2">Involved in the pyrimidine salvage pathway.</text>
</comment>
<comment type="catalytic activity">
    <reaction>
        <text>UMP + diphosphate = 5-phospho-alpha-D-ribose 1-diphosphate + uracil</text>
        <dbReference type="Rhea" id="RHEA:13017"/>
        <dbReference type="ChEBI" id="CHEBI:17568"/>
        <dbReference type="ChEBI" id="CHEBI:33019"/>
        <dbReference type="ChEBI" id="CHEBI:57865"/>
        <dbReference type="ChEBI" id="CHEBI:58017"/>
        <dbReference type="EC" id="2.4.2.9"/>
    </reaction>
</comment>
<comment type="catalytic activity">
    <reaction>
        <text>cytidine + ATP = CMP + ADP + H(+)</text>
        <dbReference type="Rhea" id="RHEA:24674"/>
        <dbReference type="ChEBI" id="CHEBI:15378"/>
        <dbReference type="ChEBI" id="CHEBI:17562"/>
        <dbReference type="ChEBI" id="CHEBI:30616"/>
        <dbReference type="ChEBI" id="CHEBI:60377"/>
        <dbReference type="ChEBI" id="CHEBI:456216"/>
        <dbReference type="EC" id="2.7.1.48"/>
    </reaction>
</comment>
<comment type="catalytic activity">
    <reaction>
        <text>uridine + ATP = UMP + ADP + H(+)</text>
        <dbReference type="Rhea" id="RHEA:16825"/>
        <dbReference type="ChEBI" id="CHEBI:15378"/>
        <dbReference type="ChEBI" id="CHEBI:16704"/>
        <dbReference type="ChEBI" id="CHEBI:30616"/>
        <dbReference type="ChEBI" id="CHEBI:57865"/>
        <dbReference type="ChEBI" id="CHEBI:456216"/>
        <dbReference type="EC" id="2.7.1.48"/>
    </reaction>
</comment>
<comment type="cofactor">
    <cofactor evidence="1">
        <name>Mg(2+)</name>
        <dbReference type="ChEBI" id="CHEBI:18420"/>
    </cofactor>
    <text evidence="1">Binds 1 Mg(2+) ion per subunit. The magnesium is bound as Mg-PRPP.</text>
</comment>
<comment type="activity regulation">
    <text evidence="1">Allosterically activated by GTP.</text>
</comment>
<comment type="pathway">
    <text>Pyrimidine metabolism; UMP biosynthesis via salvage pathway; UMP from uracil: step 1/1.</text>
</comment>
<comment type="pathway">
    <text>Pyrimidine metabolism; CTP biosynthesis via salvage pathway; CTP from cytidine: step 1/3.</text>
</comment>
<comment type="pathway">
    <text>Pyrimidine metabolism; UMP biosynthesis via salvage pathway; UMP from uridine: step 1/1.</text>
</comment>
<comment type="similarity">
    <text evidence="3">In the N-terminal section; belongs to the uridine kinase family.</text>
</comment>
<comment type="similarity">
    <text evidence="3">In the C-terminal section; belongs to the UPRTase family.</text>
</comment>